<sequence length="621" mass="70167">MDFDAIVIGGGHAGIEAALAISRLNFKTLMITQNLDTIGKLSCNPAIGGLAKGNMVREIDALGGEMGRIIDFSMIQFRVLNKSRGPAVQAPRAQADKLMYQTKAKETLERQDNLDLFQDTVVDFLLNSMRNEIEGVVTERGNKFRSSVVVLTTGTFLRGKIFIGEYRANMGRLAEFSAYGLDKTLLGLGFEMGRLKTGTPARIHRKSVDFSKTEVQFGDSDIIPFSFSNGKLDKSQLSCYVTYTNKRTHEIISENMHLSPLYSGEIVGNGPRYCPSIEDKIVKFKDKDRHQIFIEPEGFNTEEMYLNGLSSSLPENVQQKLINSIEGLEHAVITRPGYAVEYDYINPIELYPSLESKRVKGLFIAGQTNGSSGYEEAAAQGLMAGINAALRLQNKKPMILTRTSSYIGVLIDDLVTKGTKEPYRMFTSRAEHRLNLRHDTSDKRLIKIGYDLGLVDEERYSKYLFKKRRVEEIKELLKQRRLSLKDIADEQLKKHVNKDFYHILKDPSISLDNLIKIDPSLSDSKVILEQVELDIKYEGYINRQKDLIKKLHNLELVKLPFDFNYGIIEGLSREAREKFSKVQPATLAQASRIPGIRNTDITVLFIYFSNPKNKVVLNFSV</sequence>
<protein>
    <recommendedName>
        <fullName evidence="1">tRNA uridine 5-carboxymethylaminomethyl modification enzyme MnmG</fullName>
    </recommendedName>
    <alternativeName>
        <fullName evidence="1">Glucose-inhibited division protein A</fullName>
    </alternativeName>
</protein>
<accession>Q0SNY6</accession>
<accession>G0IR22</accession>
<feature type="chain" id="PRO_1000016555" description="tRNA uridine 5-carboxymethylaminomethyl modification enzyme MnmG">
    <location>
        <begin position="1"/>
        <end position="621"/>
    </location>
</feature>
<feature type="binding site" evidence="1">
    <location>
        <begin position="9"/>
        <end position="14"/>
    </location>
    <ligand>
        <name>FAD</name>
        <dbReference type="ChEBI" id="CHEBI:57692"/>
    </ligand>
</feature>
<feature type="binding site" evidence="1">
    <location>
        <begin position="270"/>
        <end position="284"/>
    </location>
    <ligand>
        <name>NAD(+)</name>
        <dbReference type="ChEBI" id="CHEBI:57540"/>
    </ligand>
</feature>
<comment type="function">
    <text evidence="1">NAD-binding protein involved in the addition of a carboxymethylaminomethyl (cmnm) group at the wobble position (U34) of certain tRNAs, forming tRNA-cmnm(5)s(2)U34.</text>
</comment>
<comment type="cofactor">
    <cofactor evidence="1">
        <name>FAD</name>
        <dbReference type="ChEBI" id="CHEBI:57692"/>
    </cofactor>
</comment>
<comment type="subunit">
    <text evidence="1">Homodimer. Heterotetramer of two MnmE and two MnmG subunits.</text>
</comment>
<comment type="subcellular location">
    <subcellularLocation>
        <location evidence="1">Cytoplasm</location>
    </subcellularLocation>
</comment>
<comment type="similarity">
    <text evidence="1">Belongs to the MnmG family.</text>
</comment>
<evidence type="ECO:0000255" key="1">
    <source>
        <dbReference type="HAMAP-Rule" id="MF_00129"/>
    </source>
</evidence>
<name>MNMG_BORAP</name>
<proteinExistence type="inferred from homology"/>
<gene>
    <name evidence="1" type="primary">mnmG</name>
    <name evidence="1" type="synonym">gidA</name>
    <name type="ordered locus">BAPKO_0180</name>
    <name type="ordered locus">BafPKo_0175</name>
</gene>
<reference key="1">
    <citation type="journal article" date="2006" name="BMC Genomics">
        <title>Comparative genome analysis: selection pressure on the Borrelia vls cassettes is essential for infectivity.</title>
        <authorList>
            <person name="Gloeckner G."/>
            <person name="Schulte-Spechtel U."/>
            <person name="Schilhabel M."/>
            <person name="Felder M."/>
            <person name="Suehnel J."/>
            <person name="Wilske B."/>
            <person name="Platzer M."/>
        </authorList>
    </citation>
    <scope>NUCLEOTIDE SEQUENCE [LARGE SCALE GENOMIC DNA]</scope>
    <source>
        <strain>PKo</strain>
    </source>
</reference>
<reference key="2">
    <citation type="journal article" date="2011" name="J. Bacteriol.">
        <title>Whole-genome sequences of two Borrelia afzelii and two Borrelia garinii Lyme disease agent isolates.</title>
        <authorList>
            <person name="Casjens S.R."/>
            <person name="Mongodin E.F."/>
            <person name="Qiu W.G."/>
            <person name="Dunn J.J."/>
            <person name="Luft B.J."/>
            <person name="Fraser-Liggett C.M."/>
            <person name="Schutzer S.E."/>
        </authorList>
    </citation>
    <scope>NUCLEOTIDE SEQUENCE [LARGE SCALE GENOMIC DNA]</scope>
    <source>
        <strain>PKo</strain>
    </source>
</reference>
<keyword id="KW-0963">Cytoplasm</keyword>
<keyword id="KW-0274">FAD</keyword>
<keyword id="KW-0285">Flavoprotein</keyword>
<keyword id="KW-0520">NAD</keyword>
<keyword id="KW-0819">tRNA processing</keyword>
<dbReference type="EMBL" id="CP000395">
    <property type="protein sequence ID" value="ABH01442.1"/>
    <property type="molecule type" value="Genomic_DNA"/>
</dbReference>
<dbReference type="EMBL" id="CP002933">
    <property type="protein sequence ID" value="AEL69408.1"/>
    <property type="molecule type" value="Genomic_DNA"/>
</dbReference>
<dbReference type="RefSeq" id="WP_011600872.1">
    <property type="nucleotide sequence ID" value="NZ_CP160066.1"/>
</dbReference>
<dbReference type="SMR" id="Q0SNY6"/>
<dbReference type="STRING" id="29518.BLA32_03420"/>
<dbReference type="GeneID" id="76831713"/>
<dbReference type="KEGG" id="baf:BAPKO_0180"/>
<dbReference type="KEGG" id="bafz:BafPKo_0175"/>
<dbReference type="PATRIC" id="fig|390236.22.peg.173"/>
<dbReference type="eggNOG" id="COG0445">
    <property type="taxonomic scope" value="Bacteria"/>
</dbReference>
<dbReference type="HOGENOM" id="CLU_007831_2_2_12"/>
<dbReference type="OrthoDB" id="9815560at2"/>
<dbReference type="Proteomes" id="UP000005216">
    <property type="component" value="Chromosome"/>
</dbReference>
<dbReference type="GO" id="GO:0005829">
    <property type="term" value="C:cytosol"/>
    <property type="evidence" value="ECO:0007669"/>
    <property type="project" value="TreeGrafter"/>
</dbReference>
<dbReference type="GO" id="GO:0050660">
    <property type="term" value="F:flavin adenine dinucleotide binding"/>
    <property type="evidence" value="ECO:0007669"/>
    <property type="project" value="UniProtKB-UniRule"/>
</dbReference>
<dbReference type="GO" id="GO:0030488">
    <property type="term" value="P:tRNA methylation"/>
    <property type="evidence" value="ECO:0007669"/>
    <property type="project" value="TreeGrafter"/>
</dbReference>
<dbReference type="GO" id="GO:0002098">
    <property type="term" value="P:tRNA wobble uridine modification"/>
    <property type="evidence" value="ECO:0007669"/>
    <property type="project" value="InterPro"/>
</dbReference>
<dbReference type="FunFam" id="1.10.150.570:FF:000001">
    <property type="entry name" value="tRNA uridine 5-carboxymethylaminomethyl modification enzyme MnmG"/>
    <property type="match status" value="1"/>
</dbReference>
<dbReference type="FunFam" id="3.50.50.60:FF:000002">
    <property type="entry name" value="tRNA uridine 5-carboxymethylaminomethyl modification enzyme MnmG"/>
    <property type="match status" value="1"/>
</dbReference>
<dbReference type="Gene3D" id="3.50.50.60">
    <property type="entry name" value="FAD/NAD(P)-binding domain"/>
    <property type="match status" value="2"/>
</dbReference>
<dbReference type="Gene3D" id="1.10.150.570">
    <property type="entry name" value="GidA associated domain, C-terminal subdomain"/>
    <property type="match status" value="1"/>
</dbReference>
<dbReference type="Gene3D" id="1.10.10.1800">
    <property type="entry name" value="tRNA uridine 5-carboxymethylaminomethyl modification enzyme MnmG/GidA"/>
    <property type="match status" value="1"/>
</dbReference>
<dbReference type="HAMAP" id="MF_00129">
    <property type="entry name" value="MnmG_GidA"/>
    <property type="match status" value="1"/>
</dbReference>
<dbReference type="InterPro" id="IPR036188">
    <property type="entry name" value="FAD/NAD-bd_sf"/>
</dbReference>
<dbReference type="InterPro" id="IPR049312">
    <property type="entry name" value="GIDA_C_N"/>
</dbReference>
<dbReference type="InterPro" id="IPR004416">
    <property type="entry name" value="MnmG"/>
</dbReference>
<dbReference type="InterPro" id="IPR002218">
    <property type="entry name" value="MnmG-rel"/>
</dbReference>
<dbReference type="InterPro" id="IPR020595">
    <property type="entry name" value="MnmG-rel_CS"/>
</dbReference>
<dbReference type="InterPro" id="IPR026904">
    <property type="entry name" value="MnmG_C"/>
</dbReference>
<dbReference type="InterPro" id="IPR047001">
    <property type="entry name" value="MnmG_C_subdom"/>
</dbReference>
<dbReference type="InterPro" id="IPR044920">
    <property type="entry name" value="MnmG_C_subdom_sf"/>
</dbReference>
<dbReference type="InterPro" id="IPR040131">
    <property type="entry name" value="MnmG_N"/>
</dbReference>
<dbReference type="NCBIfam" id="TIGR00136">
    <property type="entry name" value="mnmG_gidA"/>
    <property type="match status" value="1"/>
</dbReference>
<dbReference type="PANTHER" id="PTHR11806">
    <property type="entry name" value="GLUCOSE INHIBITED DIVISION PROTEIN A"/>
    <property type="match status" value="1"/>
</dbReference>
<dbReference type="PANTHER" id="PTHR11806:SF0">
    <property type="entry name" value="PROTEIN MTO1 HOMOLOG, MITOCHONDRIAL"/>
    <property type="match status" value="1"/>
</dbReference>
<dbReference type="Pfam" id="PF01134">
    <property type="entry name" value="GIDA"/>
    <property type="match status" value="1"/>
</dbReference>
<dbReference type="Pfam" id="PF21680">
    <property type="entry name" value="GIDA_C_1st"/>
    <property type="match status" value="1"/>
</dbReference>
<dbReference type="Pfam" id="PF13932">
    <property type="entry name" value="SAM_GIDA_C"/>
    <property type="match status" value="1"/>
</dbReference>
<dbReference type="SMART" id="SM01228">
    <property type="entry name" value="GIDA_assoc_3"/>
    <property type="match status" value="1"/>
</dbReference>
<dbReference type="SUPFAM" id="SSF51905">
    <property type="entry name" value="FAD/NAD(P)-binding domain"/>
    <property type="match status" value="1"/>
</dbReference>
<dbReference type="PROSITE" id="PS01280">
    <property type="entry name" value="GIDA_1"/>
    <property type="match status" value="1"/>
</dbReference>
<dbReference type="PROSITE" id="PS01281">
    <property type="entry name" value="GIDA_2"/>
    <property type="match status" value="1"/>
</dbReference>
<organism>
    <name type="scientific">Borreliella afzelii (strain PKo)</name>
    <name type="common">Borrelia afzelii</name>
    <dbReference type="NCBI Taxonomy" id="390236"/>
    <lineage>
        <taxon>Bacteria</taxon>
        <taxon>Pseudomonadati</taxon>
        <taxon>Spirochaetota</taxon>
        <taxon>Spirochaetia</taxon>
        <taxon>Spirochaetales</taxon>
        <taxon>Borreliaceae</taxon>
        <taxon>Borreliella</taxon>
    </lineage>
</organism>